<organism>
    <name type="scientific">Kluyveromyces lactis (strain ATCC 8585 / CBS 2359 / DSM 70799 / NBRC 1267 / NRRL Y-1140 / WM37)</name>
    <name type="common">Yeast</name>
    <name type="synonym">Candida sphaerica</name>
    <dbReference type="NCBI Taxonomy" id="284590"/>
    <lineage>
        <taxon>Eukaryota</taxon>
        <taxon>Fungi</taxon>
        <taxon>Dikarya</taxon>
        <taxon>Ascomycota</taxon>
        <taxon>Saccharomycotina</taxon>
        <taxon>Saccharomycetes</taxon>
        <taxon>Saccharomycetales</taxon>
        <taxon>Saccharomycetaceae</taxon>
        <taxon>Kluyveromyces</taxon>
    </lineage>
</organism>
<name>SODC_KLULA</name>
<dbReference type="EC" id="1.15.1.1" evidence="3"/>
<dbReference type="EMBL" id="CR382125">
    <property type="protein sequence ID" value="CAG99284.1"/>
    <property type="molecule type" value="Genomic_DNA"/>
</dbReference>
<dbReference type="RefSeq" id="XP_454197.1">
    <property type="nucleotide sequence ID" value="XM_454197.1"/>
</dbReference>
<dbReference type="SMR" id="Q6CPE2"/>
<dbReference type="FunCoup" id="Q6CPE2">
    <property type="interactions" value="839"/>
</dbReference>
<dbReference type="STRING" id="284590.Q6CPE2"/>
<dbReference type="PaxDb" id="284590-Q6CPE2"/>
<dbReference type="KEGG" id="kla:KLLA0_E05567g"/>
<dbReference type="eggNOG" id="KOG0441">
    <property type="taxonomic scope" value="Eukaryota"/>
</dbReference>
<dbReference type="HOGENOM" id="CLU_056632_4_1_1"/>
<dbReference type="InParanoid" id="Q6CPE2"/>
<dbReference type="OMA" id="AQRGFHI"/>
<dbReference type="Proteomes" id="UP000000598">
    <property type="component" value="Chromosome E"/>
</dbReference>
<dbReference type="GO" id="GO:0005737">
    <property type="term" value="C:cytoplasm"/>
    <property type="evidence" value="ECO:0007669"/>
    <property type="project" value="UniProtKB-SubCell"/>
</dbReference>
<dbReference type="GO" id="GO:0005507">
    <property type="term" value="F:copper ion binding"/>
    <property type="evidence" value="ECO:0007669"/>
    <property type="project" value="InterPro"/>
</dbReference>
<dbReference type="GO" id="GO:0004784">
    <property type="term" value="F:superoxide dismutase activity"/>
    <property type="evidence" value="ECO:0007669"/>
    <property type="project" value="UniProtKB-EC"/>
</dbReference>
<dbReference type="CDD" id="cd00305">
    <property type="entry name" value="Cu-Zn_Superoxide_Dismutase"/>
    <property type="match status" value="1"/>
</dbReference>
<dbReference type="FunFam" id="2.60.40.200:FF:000001">
    <property type="entry name" value="Superoxide dismutase [Cu-Zn]"/>
    <property type="match status" value="1"/>
</dbReference>
<dbReference type="Gene3D" id="2.60.40.200">
    <property type="entry name" value="Superoxide dismutase, copper/zinc binding domain"/>
    <property type="match status" value="1"/>
</dbReference>
<dbReference type="InterPro" id="IPR036423">
    <property type="entry name" value="SOD-like_Cu/Zn_dom_sf"/>
</dbReference>
<dbReference type="InterPro" id="IPR024134">
    <property type="entry name" value="SOD_Cu/Zn_/chaperone"/>
</dbReference>
<dbReference type="InterPro" id="IPR018152">
    <property type="entry name" value="SOD_Cu/Zn_BS"/>
</dbReference>
<dbReference type="InterPro" id="IPR001424">
    <property type="entry name" value="SOD_Cu_Zn_dom"/>
</dbReference>
<dbReference type="PANTHER" id="PTHR10003">
    <property type="entry name" value="SUPEROXIDE DISMUTASE CU-ZN -RELATED"/>
    <property type="match status" value="1"/>
</dbReference>
<dbReference type="Pfam" id="PF00080">
    <property type="entry name" value="Sod_Cu"/>
    <property type="match status" value="1"/>
</dbReference>
<dbReference type="PRINTS" id="PR00068">
    <property type="entry name" value="CUZNDISMTASE"/>
</dbReference>
<dbReference type="SUPFAM" id="SSF49329">
    <property type="entry name" value="Cu,Zn superoxide dismutase-like"/>
    <property type="match status" value="1"/>
</dbReference>
<dbReference type="PROSITE" id="PS00087">
    <property type="entry name" value="SOD_CU_ZN_1"/>
    <property type="match status" value="1"/>
</dbReference>
<dbReference type="PROSITE" id="PS00332">
    <property type="entry name" value="SOD_CU_ZN_2"/>
    <property type="match status" value="1"/>
</dbReference>
<protein>
    <recommendedName>
        <fullName>Superoxide dismutase [Cu-Zn]</fullName>
        <ecNumber evidence="3">1.15.1.1</ecNumber>
    </recommendedName>
</protein>
<evidence type="ECO:0000250" key="1">
    <source>
        <dbReference type="UniProtKB" id="P00442"/>
    </source>
</evidence>
<evidence type="ECO:0000250" key="2">
    <source>
        <dbReference type="UniProtKB" id="P00445"/>
    </source>
</evidence>
<evidence type="ECO:0000250" key="3">
    <source>
        <dbReference type="UniProtKB" id="P85978"/>
    </source>
</evidence>
<evidence type="ECO:0000305" key="4"/>
<comment type="function">
    <text evidence="1">Destroys radicals which are normally produced within the cells and which are toxic to biological systems.</text>
</comment>
<comment type="catalytic activity">
    <reaction evidence="3">
        <text>2 superoxide + 2 H(+) = H2O2 + O2</text>
        <dbReference type="Rhea" id="RHEA:20696"/>
        <dbReference type="ChEBI" id="CHEBI:15378"/>
        <dbReference type="ChEBI" id="CHEBI:15379"/>
        <dbReference type="ChEBI" id="CHEBI:16240"/>
        <dbReference type="ChEBI" id="CHEBI:18421"/>
        <dbReference type="EC" id="1.15.1.1"/>
    </reaction>
</comment>
<comment type="cofactor">
    <cofactor evidence="2">
        <name>Cu cation</name>
        <dbReference type="ChEBI" id="CHEBI:23378"/>
    </cofactor>
    <text evidence="2">Binds 1 copper ion per subunit.</text>
</comment>
<comment type="cofactor">
    <cofactor evidence="2">
        <name>Zn(2+)</name>
        <dbReference type="ChEBI" id="CHEBI:29105"/>
    </cofactor>
    <text evidence="2">Binds 1 zinc ion per subunit.</text>
</comment>
<comment type="subunit">
    <text evidence="3">Homodimer.</text>
</comment>
<comment type="subcellular location">
    <subcellularLocation>
        <location evidence="2">Cytoplasm</location>
    </subcellularLocation>
</comment>
<comment type="similarity">
    <text evidence="4">Belongs to the Cu-Zn superoxide dismutase family.</text>
</comment>
<gene>
    <name type="primary">SOD1</name>
    <name type="ordered locus">KLLA0E05522g</name>
</gene>
<proteinExistence type="inferred from homology"/>
<sequence length="155" mass="16149">MVNAVAVLKGDSSVSGIVRFEQESEDQQTKISWEITGNDANALRGFHIHTFGDNTNGCTSAGPHFNPFNKNHGAPEDEERHVGDLGNIPTDAQGISKGSLTDKHIKLLGPLSIVGRTVVVHAGQDDLGKGGDAESLKTGNAGARHACGVIGISNA</sequence>
<feature type="initiator methionine" description="Removed" evidence="2">
    <location>
        <position position="1"/>
    </location>
</feature>
<feature type="chain" id="PRO_0000164122" description="Superoxide dismutase [Cu-Zn]">
    <location>
        <begin position="2"/>
        <end position="155"/>
    </location>
</feature>
<feature type="binding site" evidence="2">
    <location>
        <position position="47"/>
    </location>
    <ligand>
        <name>Cu cation</name>
        <dbReference type="ChEBI" id="CHEBI:23378"/>
        <note>catalytic</note>
    </ligand>
</feature>
<feature type="binding site" evidence="2">
    <location>
        <position position="49"/>
    </location>
    <ligand>
        <name>Cu cation</name>
        <dbReference type="ChEBI" id="CHEBI:23378"/>
        <note>catalytic</note>
    </ligand>
</feature>
<feature type="binding site" evidence="2">
    <location>
        <position position="64"/>
    </location>
    <ligand>
        <name>Cu cation</name>
        <dbReference type="ChEBI" id="CHEBI:23378"/>
        <note>catalytic</note>
    </ligand>
</feature>
<feature type="binding site" evidence="2">
    <location>
        <position position="64"/>
    </location>
    <ligand>
        <name>Zn(2+)</name>
        <dbReference type="ChEBI" id="CHEBI:29105"/>
        <note>structural</note>
    </ligand>
</feature>
<feature type="binding site" evidence="2">
    <location>
        <position position="72"/>
    </location>
    <ligand>
        <name>Zn(2+)</name>
        <dbReference type="ChEBI" id="CHEBI:29105"/>
        <note>structural</note>
    </ligand>
</feature>
<feature type="binding site" evidence="2">
    <location>
        <position position="81"/>
    </location>
    <ligand>
        <name>Zn(2+)</name>
        <dbReference type="ChEBI" id="CHEBI:29105"/>
        <note>structural</note>
    </ligand>
</feature>
<feature type="binding site" evidence="2">
    <location>
        <position position="84"/>
    </location>
    <ligand>
        <name>Zn(2+)</name>
        <dbReference type="ChEBI" id="CHEBI:29105"/>
        <note>structural</note>
    </ligand>
</feature>
<feature type="binding site" evidence="2">
    <location>
        <position position="121"/>
    </location>
    <ligand>
        <name>Cu cation</name>
        <dbReference type="ChEBI" id="CHEBI:23378"/>
        <note>catalytic</note>
    </ligand>
</feature>
<feature type="binding site" evidence="2">
    <location>
        <position position="144"/>
    </location>
    <ligand>
        <name>substrate</name>
    </ligand>
</feature>
<feature type="disulfide bond" evidence="2">
    <location>
        <begin position="58"/>
        <end position="147"/>
    </location>
</feature>
<reference key="1">
    <citation type="journal article" date="2004" name="Nature">
        <title>Genome evolution in yeasts.</title>
        <authorList>
            <person name="Dujon B."/>
            <person name="Sherman D."/>
            <person name="Fischer G."/>
            <person name="Durrens P."/>
            <person name="Casaregola S."/>
            <person name="Lafontaine I."/>
            <person name="de Montigny J."/>
            <person name="Marck C."/>
            <person name="Neuveglise C."/>
            <person name="Talla E."/>
            <person name="Goffard N."/>
            <person name="Frangeul L."/>
            <person name="Aigle M."/>
            <person name="Anthouard V."/>
            <person name="Babour A."/>
            <person name="Barbe V."/>
            <person name="Barnay S."/>
            <person name="Blanchin S."/>
            <person name="Beckerich J.-M."/>
            <person name="Beyne E."/>
            <person name="Bleykasten C."/>
            <person name="Boisrame A."/>
            <person name="Boyer J."/>
            <person name="Cattolico L."/>
            <person name="Confanioleri F."/>
            <person name="de Daruvar A."/>
            <person name="Despons L."/>
            <person name="Fabre E."/>
            <person name="Fairhead C."/>
            <person name="Ferry-Dumazet H."/>
            <person name="Groppi A."/>
            <person name="Hantraye F."/>
            <person name="Hennequin C."/>
            <person name="Jauniaux N."/>
            <person name="Joyet P."/>
            <person name="Kachouri R."/>
            <person name="Kerrest A."/>
            <person name="Koszul R."/>
            <person name="Lemaire M."/>
            <person name="Lesur I."/>
            <person name="Ma L."/>
            <person name="Muller H."/>
            <person name="Nicaud J.-M."/>
            <person name="Nikolski M."/>
            <person name="Oztas S."/>
            <person name="Ozier-Kalogeropoulos O."/>
            <person name="Pellenz S."/>
            <person name="Potier S."/>
            <person name="Richard G.-F."/>
            <person name="Straub M.-L."/>
            <person name="Suleau A."/>
            <person name="Swennen D."/>
            <person name="Tekaia F."/>
            <person name="Wesolowski-Louvel M."/>
            <person name="Westhof E."/>
            <person name="Wirth B."/>
            <person name="Zeniou-Meyer M."/>
            <person name="Zivanovic Y."/>
            <person name="Bolotin-Fukuhara M."/>
            <person name="Thierry A."/>
            <person name="Bouchier C."/>
            <person name="Caudron B."/>
            <person name="Scarpelli C."/>
            <person name="Gaillardin C."/>
            <person name="Weissenbach J."/>
            <person name="Wincker P."/>
            <person name="Souciet J.-L."/>
        </authorList>
    </citation>
    <scope>NUCLEOTIDE SEQUENCE [LARGE SCALE GENOMIC DNA]</scope>
    <source>
        <strain>ATCC 8585 / CBS 2359 / DSM 70799 / NBRC 1267 / NRRL Y-1140 / WM37</strain>
    </source>
</reference>
<keyword id="KW-0049">Antioxidant</keyword>
<keyword id="KW-0186">Copper</keyword>
<keyword id="KW-0963">Cytoplasm</keyword>
<keyword id="KW-1015">Disulfide bond</keyword>
<keyword id="KW-0479">Metal-binding</keyword>
<keyword id="KW-0560">Oxidoreductase</keyword>
<keyword id="KW-1185">Reference proteome</keyword>
<keyword id="KW-0862">Zinc</keyword>
<accession>Q6CPE2</accession>